<evidence type="ECO:0000255" key="1">
    <source>
        <dbReference type="HAMAP-Rule" id="MF_01569"/>
    </source>
</evidence>
<proteinExistence type="inferred from homology"/>
<feature type="chain" id="PRO_0000248662" description="Proline--tRNA ligase">
    <location>
        <begin position="1"/>
        <end position="578"/>
    </location>
</feature>
<protein>
    <recommendedName>
        <fullName evidence="1">Proline--tRNA ligase</fullName>
        <ecNumber evidence="1">6.1.1.15</ecNumber>
    </recommendedName>
    <alternativeName>
        <fullName evidence="1">Prolyl-tRNA synthetase</fullName>
        <shortName evidence="1">ProRS</shortName>
    </alternativeName>
</protein>
<comment type="function">
    <text evidence="1">Catalyzes the attachment of proline to tRNA(Pro) in a two-step reaction: proline is first activated by ATP to form Pro-AMP and then transferred to the acceptor end of tRNA(Pro). As ProRS can inadvertently accommodate and process non-cognate amino acids such as alanine and cysteine, to avoid such errors it has two additional distinct editing activities against alanine. One activity is designated as 'pretransfer' editing and involves the tRNA(Pro)-independent hydrolysis of activated Ala-AMP. The other activity is designated 'posttransfer' editing and involves deacylation of mischarged Ala-tRNA(Pro). The misacylated Cys-tRNA(Pro) is not edited by ProRS.</text>
</comment>
<comment type="catalytic activity">
    <reaction evidence="1">
        <text>tRNA(Pro) + L-proline + ATP = L-prolyl-tRNA(Pro) + AMP + diphosphate</text>
        <dbReference type="Rhea" id="RHEA:14305"/>
        <dbReference type="Rhea" id="RHEA-COMP:9700"/>
        <dbReference type="Rhea" id="RHEA-COMP:9702"/>
        <dbReference type="ChEBI" id="CHEBI:30616"/>
        <dbReference type="ChEBI" id="CHEBI:33019"/>
        <dbReference type="ChEBI" id="CHEBI:60039"/>
        <dbReference type="ChEBI" id="CHEBI:78442"/>
        <dbReference type="ChEBI" id="CHEBI:78532"/>
        <dbReference type="ChEBI" id="CHEBI:456215"/>
        <dbReference type="EC" id="6.1.1.15"/>
    </reaction>
</comment>
<comment type="subunit">
    <text evidence="1">Homodimer.</text>
</comment>
<comment type="subcellular location">
    <subcellularLocation>
        <location evidence="1">Cytoplasm</location>
    </subcellularLocation>
</comment>
<comment type="domain">
    <text evidence="1">Consists of three domains: the N-terminal catalytic domain, the editing domain and the C-terminal anticodon-binding domain.</text>
</comment>
<comment type="similarity">
    <text evidence="1">Belongs to the class-II aminoacyl-tRNA synthetase family. ProS type 1 subfamily.</text>
</comment>
<dbReference type="EC" id="6.1.1.15" evidence="1"/>
<dbReference type="EMBL" id="CP000086">
    <property type="protein sequence ID" value="ABC37988.1"/>
    <property type="molecule type" value="Genomic_DNA"/>
</dbReference>
<dbReference type="RefSeq" id="WP_009888930.1">
    <property type="nucleotide sequence ID" value="NZ_CP008785.1"/>
</dbReference>
<dbReference type="SMR" id="Q2SZF6"/>
<dbReference type="GeneID" id="45120898"/>
<dbReference type="KEGG" id="bte:BTH_I1146"/>
<dbReference type="HOGENOM" id="CLU_016739_0_0_4"/>
<dbReference type="Proteomes" id="UP000001930">
    <property type="component" value="Chromosome I"/>
</dbReference>
<dbReference type="GO" id="GO:0005829">
    <property type="term" value="C:cytosol"/>
    <property type="evidence" value="ECO:0007669"/>
    <property type="project" value="TreeGrafter"/>
</dbReference>
<dbReference type="GO" id="GO:0002161">
    <property type="term" value="F:aminoacyl-tRNA deacylase activity"/>
    <property type="evidence" value="ECO:0007669"/>
    <property type="project" value="InterPro"/>
</dbReference>
<dbReference type="GO" id="GO:0005524">
    <property type="term" value="F:ATP binding"/>
    <property type="evidence" value="ECO:0007669"/>
    <property type="project" value="UniProtKB-UniRule"/>
</dbReference>
<dbReference type="GO" id="GO:0004827">
    <property type="term" value="F:proline-tRNA ligase activity"/>
    <property type="evidence" value="ECO:0007669"/>
    <property type="project" value="UniProtKB-UniRule"/>
</dbReference>
<dbReference type="GO" id="GO:0006433">
    <property type="term" value="P:prolyl-tRNA aminoacylation"/>
    <property type="evidence" value="ECO:0007669"/>
    <property type="project" value="UniProtKB-UniRule"/>
</dbReference>
<dbReference type="CDD" id="cd04334">
    <property type="entry name" value="ProRS-INS"/>
    <property type="match status" value="1"/>
</dbReference>
<dbReference type="CDD" id="cd00861">
    <property type="entry name" value="ProRS_anticodon_short"/>
    <property type="match status" value="1"/>
</dbReference>
<dbReference type="CDD" id="cd00779">
    <property type="entry name" value="ProRS_core_prok"/>
    <property type="match status" value="1"/>
</dbReference>
<dbReference type="FunFam" id="3.30.930.10:FF:000043">
    <property type="entry name" value="Proline--tRNA ligase"/>
    <property type="match status" value="1"/>
</dbReference>
<dbReference type="FunFam" id="3.30.930.10:FF:000097">
    <property type="entry name" value="Proline--tRNA ligase"/>
    <property type="match status" value="1"/>
</dbReference>
<dbReference type="Gene3D" id="3.40.50.800">
    <property type="entry name" value="Anticodon-binding domain"/>
    <property type="match status" value="1"/>
</dbReference>
<dbReference type="Gene3D" id="3.30.930.10">
    <property type="entry name" value="Bira Bifunctional Protein, Domain 2"/>
    <property type="match status" value="2"/>
</dbReference>
<dbReference type="Gene3D" id="3.90.960.10">
    <property type="entry name" value="YbaK/aminoacyl-tRNA synthetase-associated domain"/>
    <property type="match status" value="1"/>
</dbReference>
<dbReference type="HAMAP" id="MF_01569">
    <property type="entry name" value="Pro_tRNA_synth_type1"/>
    <property type="match status" value="1"/>
</dbReference>
<dbReference type="InterPro" id="IPR002314">
    <property type="entry name" value="aa-tRNA-synt_IIb"/>
</dbReference>
<dbReference type="InterPro" id="IPR006195">
    <property type="entry name" value="aa-tRNA-synth_II"/>
</dbReference>
<dbReference type="InterPro" id="IPR045864">
    <property type="entry name" value="aa-tRNA-synth_II/BPL/LPL"/>
</dbReference>
<dbReference type="InterPro" id="IPR004154">
    <property type="entry name" value="Anticodon-bd"/>
</dbReference>
<dbReference type="InterPro" id="IPR036621">
    <property type="entry name" value="Anticodon-bd_dom_sf"/>
</dbReference>
<dbReference type="InterPro" id="IPR002316">
    <property type="entry name" value="Pro-tRNA-ligase_IIa"/>
</dbReference>
<dbReference type="InterPro" id="IPR004500">
    <property type="entry name" value="Pro-tRNA-synth_IIa_bac-type"/>
</dbReference>
<dbReference type="InterPro" id="IPR023717">
    <property type="entry name" value="Pro-tRNA-Synthase_IIa_type1"/>
</dbReference>
<dbReference type="InterPro" id="IPR050062">
    <property type="entry name" value="Pro-tRNA_synthetase"/>
</dbReference>
<dbReference type="InterPro" id="IPR044140">
    <property type="entry name" value="ProRS_anticodon_short"/>
</dbReference>
<dbReference type="InterPro" id="IPR033730">
    <property type="entry name" value="ProRS_core_prok"/>
</dbReference>
<dbReference type="InterPro" id="IPR036754">
    <property type="entry name" value="YbaK/aa-tRNA-synt-asso_dom_sf"/>
</dbReference>
<dbReference type="InterPro" id="IPR007214">
    <property type="entry name" value="YbaK/aa-tRNA-synth-assoc-dom"/>
</dbReference>
<dbReference type="NCBIfam" id="NF006625">
    <property type="entry name" value="PRK09194.1"/>
    <property type="match status" value="1"/>
</dbReference>
<dbReference type="NCBIfam" id="TIGR00409">
    <property type="entry name" value="proS_fam_II"/>
    <property type="match status" value="1"/>
</dbReference>
<dbReference type="PANTHER" id="PTHR42753">
    <property type="entry name" value="MITOCHONDRIAL RIBOSOME PROTEIN L39/PROLYL-TRNA LIGASE FAMILY MEMBER"/>
    <property type="match status" value="1"/>
</dbReference>
<dbReference type="PANTHER" id="PTHR42753:SF2">
    <property type="entry name" value="PROLINE--TRNA LIGASE"/>
    <property type="match status" value="1"/>
</dbReference>
<dbReference type="Pfam" id="PF03129">
    <property type="entry name" value="HGTP_anticodon"/>
    <property type="match status" value="1"/>
</dbReference>
<dbReference type="Pfam" id="PF00587">
    <property type="entry name" value="tRNA-synt_2b"/>
    <property type="match status" value="1"/>
</dbReference>
<dbReference type="Pfam" id="PF04073">
    <property type="entry name" value="tRNA_edit"/>
    <property type="match status" value="1"/>
</dbReference>
<dbReference type="PIRSF" id="PIRSF001535">
    <property type="entry name" value="ProRS_1"/>
    <property type="match status" value="1"/>
</dbReference>
<dbReference type="PRINTS" id="PR01046">
    <property type="entry name" value="TRNASYNTHPRO"/>
</dbReference>
<dbReference type="SUPFAM" id="SSF52954">
    <property type="entry name" value="Class II aaRS ABD-related"/>
    <property type="match status" value="1"/>
</dbReference>
<dbReference type="SUPFAM" id="SSF55681">
    <property type="entry name" value="Class II aaRS and biotin synthetases"/>
    <property type="match status" value="1"/>
</dbReference>
<dbReference type="SUPFAM" id="SSF55826">
    <property type="entry name" value="YbaK/ProRS associated domain"/>
    <property type="match status" value="1"/>
</dbReference>
<dbReference type="PROSITE" id="PS50862">
    <property type="entry name" value="AA_TRNA_LIGASE_II"/>
    <property type="match status" value="1"/>
</dbReference>
<gene>
    <name evidence="1" type="primary">proS</name>
    <name type="ordered locus">BTH_I1146</name>
</gene>
<accession>Q2SZF6</accession>
<name>SYP_BURTA</name>
<keyword id="KW-0030">Aminoacyl-tRNA synthetase</keyword>
<keyword id="KW-0067">ATP-binding</keyword>
<keyword id="KW-0963">Cytoplasm</keyword>
<keyword id="KW-0436">Ligase</keyword>
<keyword id="KW-0547">Nucleotide-binding</keyword>
<keyword id="KW-0648">Protein biosynthesis</keyword>
<sequence>MKASRFFIGTLKEAPADAEIVSHKLMVRAGMIRRVAGGIYNYLPVGLRSIRKVEAIVREEMNRAGAIELLMPAVQPAELWQESGRWEQYGPELLRFKDRKQNEFVIGPTHEEVVTDIARNQIKSYRQMPVNFYQIQTKFRDEIRPRFGVMRGREFIMKDAYSFDKDHESLKESYKKMYDAYVRIFTRIGLEFRPVAADNGSIGGSGSHEFHVIADTGEDAIAYCPTSDFAANVEAAEALPLLASRAAPAEAMQKVATPGKAKCEAVAELMGIPLERTIKSIVLATDNEGAEPTVWLLMLRGDHDLNEIKTAKLPGLAGYRFATEAEIVEWFGTPPGYLGPIGTKKPVRVVADRTVANMSDFVVGANEVDYHIAGVNWGRDLPEPVIADIRNVKAGDPSPDGKGVLDICRGIEVGHVFQLGTKYSDAMGATFIDESGKAQPMVMGCYGIGVTRILGAAIEQNFDDKGIIWPEAIAPFEVVLCPMGYDRSDAVREAADKLYADLAAAGIDVILDDRGERPGVMFADWELIGVPHRLVIGERGLKDGKIEYQGRRDAEATLLPADSAATAVAEKVRAALAR</sequence>
<organism>
    <name type="scientific">Burkholderia thailandensis (strain ATCC 700388 / DSM 13276 / CCUG 48851 / CIP 106301 / E264)</name>
    <dbReference type="NCBI Taxonomy" id="271848"/>
    <lineage>
        <taxon>Bacteria</taxon>
        <taxon>Pseudomonadati</taxon>
        <taxon>Pseudomonadota</taxon>
        <taxon>Betaproteobacteria</taxon>
        <taxon>Burkholderiales</taxon>
        <taxon>Burkholderiaceae</taxon>
        <taxon>Burkholderia</taxon>
        <taxon>pseudomallei group</taxon>
    </lineage>
</organism>
<reference key="1">
    <citation type="journal article" date="2005" name="BMC Genomics">
        <title>Bacterial genome adaptation to niches: divergence of the potential virulence genes in three Burkholderia species of different survival strategies.</title>
        <authorList>
            <person name="Kim H.S."/>
            <person name="Schell M.A."/>
            <person name="Yu Y."/>
            <person name="Ulrich R.L."/>
            <person name="Sarria S.H."/>
            <person name="Nierman W.C."/>
            <person name="DeShazer D."/>
        </authorList>
    </citation>
    <scope>NUCLEOTIDE SEQUENCE [LARGE SCALE GENOMIC DNA]</scope>
    <source>
        <strain>ATCC 700388 / DSM 13276 / CCUG 48851 / CIP 106301 / E264</strain>
    </source>
</reference>